<dbReference type="EMBL" id="AJ851187">
    <property type="protein sequence ID" value="CAH64860.1"/>
    <property type="molecule type" value="mRNA"/>
</dbReference>
<dbReference type="SMR" id="Q5K0C1"/>
<dbReference type="ConoServer" id="1076">
    <property type="toxin name" value="Conotoxin-5 precursor"/>
</dbReference>
<dbReference type="GO" id="GO:0005576">
    <property type="term" value="C:extracellular region"/>
    <property type="evidence" value="ECO:0007669"/>
    <property type="project" value="UniProtKB-SubCell"/>
</dbReference>
<dbReference type="GO" id="GO:0008200">
    <property type="term" value="F:ion channel inhibitor activity"/>
    <property type="evidence" value="ECO:0007669"/>
    <property type="project" value="InterPro"/>
</dbReference>
<dbReference type="GO" id="GO:0090729">
    <property type="term" value="F:toxin activity"/>
    <property type="evidence" value="ECO:0007669"/>
    <property type="project" value="UniProtKB-KW"/>
</dbReference>
<dbReference type="InterPro" id="IPR004214">
    <property type="entry name" value="Conotoxin"/>
</dbReference>
<dbReference type="Pfam" id="PF02950">
    <property type="entry name" value="Conotoxin"/>
    <property type="match status" value="1"/>
</dbReference>
<keyword id="KW-0165">Cleavage on pair of basic residues</keyword>
<keyword id="KW-1015">Disulfide bond</keyword>
<keyword id="KW-0960">Knottin</keyword>
<keyword id="KW-0964">Secreted</keyword>
<keyword id="KW-0732">Signal</keyword>
<keyword id="KW-0800">Toxin</keyword>
<comment type="subcellular location">
    <subcellularLocation>
        <location evidence="1">Secreted</location>
    </subcellularLocation>
</comment>
<comment type="tissue specificity">
    <text>Expressed by the venom duct.</text>
</comment>
<comment type="domain">
    <text evidence="1">The presence of a 'disulfide through disulfide knot' structurally defines this protein as a knottin.</text>
</comment>
<comment type="domain">
    <text>The cysteine framework is VI/VII (C-C-CC-C-C).</text>
</comment>
<comment type="similarity">
    <text evidence="3">Belongs to the conotoxin O1 superfamily.</text>
</comment>
<accession>Q5K0C1</accession>
<proteinExistence type="evidence at transcript level"/>
<name>O165_CONIM</name>
<evidence type="ECO:0000250" key="1"/>
<evidence type="ECO:0000255" key="2"/>
<evidence type="ECO:0000305" key="3"/>
<feature type="signal peptide" evidence="2">
    <location>
        <begin position="1"/>
        <end position="22"/>
    </location>
</feature>
<feature type="propeptide" id="PRO_0000034991" evidence="1">
    <location>
        <begin position="23"/>
        <end position="49"/>
    </location>
</feature>
<feature type="peptide" id="PRO_0000034992" description="Conotoxin 5">
    <location>
        <begin position="52"/>
        <end position="78"/>
    </location>
</feature>
<feature type="disulfide bond" evidence="1">
    <location>
        <begin position="53"/>
        <end position="69"/>
    </location>
</feature>
<feature type="disulfide bond" evidence="1">
    <location>
        <begin position="60"/>
        <end position="73"/>
    </location>
</feature>
<feature type="disulfide bond" evidence="1">
    <location>
        <begin position="68"/>
        <end position="77"/>
    </location>
</feature>
<sequence>MKLTCMMIVTVLFLTAWIFITADNSRNGIENLPRMRRHEMKNPKASKLNKRGCREGGEFCGTLYEERCCSGWCFFVCV</sequence>
<reference key="1">
    <citation type="journal article" date="2005" name="Peptides">
        <title>Direct cDNA cloning of novel conopeptide precursors of the O-superfamily.</title>
        <authorList>
            <person name="Kauferstein S."/>
            <person name="Melaun C."/>
            <person name="Mebs D."/>
        </authorList>
    </citation>
    <scope>NUCLEOTIDE SEQUENCE [MRNA]</scope>
    <source>
        <tissue>Venom duct</tissue>
    </source>
</reference>
<protein>
    <recommendedName>
        <fullName>Conotoxin 5</fullName>
    </recommendedName>
</protein>
<organism>
    <name type="scientific">Conus imperialis</name>
    <name type="common">Imperial cone</name>
    <dbReference type="NCBI Taxonomy" id="35631"/>
    <lineage>
        <taxon>Eukaryota</taxon>
        <taxon>Metazoa</taxon>
        <taxon>Spiralia</taxon>
        <taxon>Lophotrochozoa</taxon>
        <taxon>Mollusca</taxon>
        <taxon>Gastropoda</taxon>
        <taxon>Caenogastropoda</taxon>
        <taxon>Neogastropoda</taxon>
        <taxon>Conoidea</taxon>
        <taxon>Conidae</taxon>
        <taxon>Conus</taxon>
        <taxon>Stephanoconus</taxon>
    </lineage>
</organism>